<keyword id="KW-0007">Acetylation</keyword>
<keyword id="KW-0328">Glycosyltransferase</keyword>
<keyword id="KW-1185">Reference proteome</keyword>
<keyword id="KW-0808">Transferase</keyword>
<proteinExistence type="inferred from homology"/>
<gene>
    <name evidence="2" type="primary">deoD</name>
    <name type="ordered locus">EC55989_5046</name>
</gene>
<feature type="chain" id="PRO_1000186186" description="Purine nucleoside phosphorylase DeoD-type">
    <location>
        <begin position="1"/>
        <end position="239"/>
    </location>
</feature>
<feature type="active site" description="Proton donor" evidence="2">
    <location>
        <position position="205"/>
    </location>
</feature>
<feature type="binding site" evidence="1">
    <location>
        <position position="5"/>
    </location>
    <ligand>
        <name>a purine D-ribonucleoside</name>
        <dbReference type="ChEBI" id="CHEBI:142355"/>
        <note>ligand shared between dimeric partners</note>
    </ligand>
</feature>
<feature type="binding site" description="in other chain" evidence="1">
    <location>
        <position position="21"/>
    </location>
    <ligand>
        <name>phosphate</name>
        <dbReference type="ChEBI" id="CHEBI:43474"/>
        <note>ligand shared between dimeric partners</note>
    </ligand>
</feature>
<feature type="binding site" description="in other chain" evidence="1">
    <location>
        <position position="25"/>
    </location>
    <ligand>
        <name>phosphate</name>
        <dbReference type="ChEBI" id="CHEBI:43474"/>
        <note>ligand shared between dimeric partners</note>
    </ligand>
</feature>
<feature type="binding site" evidence="1">
    <location>
        <position position="44"/>
    </location>
    <ligand>
        <name>phosphate</name>
        <dbReference type="ChEBI" id="CHEBI:43474"/>
        <note>ligand shared between dimeric partners</note>
    </ligand>
</feature>
<feature type="binding site" description="in other chain" evidence="1">
    <location>
        <begin position="88"/>
        <end position="91"/>
    </location>
    <ligand>
        <name>phosphate</name>
        <dbReference type="ChEBI" id="CHEBI:43474"/>
        <note>ligand shared between dimeric partners</note>
    </ligand>
</feature>
<feature type="binding site" description="in other chain" evidence="1">
    <location>
        <begin position="180"/>
        <end position="182"/>
    </location>
    <ligand>
        <name>a purine D-ribonucleoside</name>
        <dbReference type="ChEBI" id="CHEBI:142355"/>
        <note>ligand shared between dimeric partners</note>
    </ligand>
</feature>
<feature type="binding site" description="in other chain" evidence="1">
    <location>
        <begin position="204"/>
        <end position="205"/>
    </location>
    <ligand>
        <name>a purine D-ribonucleoside</name>
        <dbReference type="ChEBI" id="CHEBI:142355"/>
        <note>ligand shared between dimeric partners</note>
    </ligand>
</feature>
<feature type="site" description="Important for catalytic activity" evidence="2">
    <location>
        <position position="218"/>
    </location>
</feature>
<feature type="modified residue" description="N6-acetyllysine" evidence="2">
    <location>
        <position position="27"/>
    </location>
</feature>
<comment type="function">
    <text evidence="2">Catalyzes the reversible phosphorolytic breakdown of the N-glycosidic bond in the beta-(deoxy)ribonucleoside molecules, with the formation of the corresponding free purine bases and pentose-1-phosphate.</text>
</comment>
<comment type="catalytic activity">
    <reaction evidence="2">
        <text>a purine D-ribonucleoside + phosphate = a purine nucleobase + alpha-D-ribose 1-phosphate</text>
        <dbReference type="Rhea" id="RHEA:19805"/>
        <dbReference type="ChEBI" id="CHEBI:26386"/>
        <dbReference type="ChEBI" id="CHEBI:43474"/>
        <dbReference type="ChEBI" id="CHEBI:57720"/>
        <dbReference type="ChEBI" id="CHEBI:142355"/>
        <dbReference type="EC" id="2.4.2.1"/>
    </reaction>
</comment>
<comment type="catalytic activity">
    <reaction evidence="2">
        <text>a purine 2'-deoxy-D-ribonucleoside + phosphate = a purine nucleobase + 2-deoxy-alpha-D-ribose 1-phosphate</text>
        <dbReference type="Rhea" id="RHEA:36431"/>
        <dbReference type="ChEBI" id="CHEBI:26386"/>
        <dbReference type="ChEBI" id="CHEBI:43474"/>
        <dbReference type="ChEBI" id="CHEBI:57259"/>
        <dbReference type="ChEBI" id="CHEBI:142361"/>
        <dbReference type="EC" id="2.4.2.1"/>
    </reaction>
</comment>
<comment type="subunit">
    <text evidence="2">Homohexamer; trimer of homodimers.</text>
</comment>
<comment type="similarity">
    <text evidence="2">Belongs to the PNP/UDP phosphorylase family.</text>
</comment>
<name>DEOD_ECO55</name>
<dbReference type="EC" id="2.4.2.1" evidence="2"/>
<dbReference type="EMBL" id="CU928145">
    <property type="protein sequence ID" value="CAV02186.1"/>
    <property type="molecule type" value="Genomic_DNA"/>
</dbReference>
<dbReference type="RefSeq" id="WP_000224877.1">
    <property type="nucleotide sequence ID" value="NC_011748.1"/>
</dbReference>
<dbReference type="SMR" id="B7LEN0"/>
<dbReference type="GeneID" id="93777460"/>
<dbReference type="KEGG" id="eck:EC55989_5046"/>
<dbReference type="HOGENOM" id="CLU_068457_2_0_6"/>
<dbReference type="Proteomes" id="UP000000746">
    <property type="component" value="Chromosome"/>
</dbReference>
<dbReference type="GO" id="GO:0005829">
    <property type="term" value="C:cytosol"/>
    <property type="evidence" value="ECO:0007669"/>
    <property type="project" value="TreeGrafter"/>
</dbReference>
<dbReference type="GO" id="GO:0004731">
    <property type="term" value="F:purine-nucleoside phosphorylase activity"/>
    <property type="evidence" value="ECO:0007669"/>
    <property type="project" value="UniProtKB-UniRule"/>
</dbReference>
<dbReference type="GO" id="GO:0006152">
    <property type="term" value="P:purine nucleoside catabolic process"/>
    <property type="evidence" value="ECO:0007669"/>
    <property type="project" value="TreeGrafter"/>
</dbReference>
<dbReference type="CDD" id="cd09006">
    <property type="entry name" value="PNP_EcPNPI-like"/>
    <property type="match status" value="1"/>
</dbReference>
<dbReference type="FunFam" id="3.40.50.1580:FF:000002">
    <property type="entry name" value="Purine nucleoside phosphorylase DeoD-type"/>
    <property type="match status" value="1"/>
</dbReference>
<dbReference type="Gene3D" id="3.40.50.1580">
    <property type="entry name" value="Nucleoside phosphorylase domain"/>
    <property type="match status" value="1"/>
</dbReference>
<dbReference type="HAMAP" id="MF_01627">
    <property type="entry name" value="Pur_nucleosid_phosp"/>
    <property type="match status" value="1"/>
</dbReference>
<dbReference type="InterPro" id="IPR004402">
    <property type="entry name" value="DeoD-type"/>
</dbReference>
<dbReference type="InterPro" id="IPR018016">
    <property type="entry name" value="Nucleoside_phosphorylase_CS"/>
</dbReference>
<dbReference type="InterPro" id="IPR000845">
    <property type="entry name" value="Nucleoside_phosphorylase_d"/>
</dbReference>
<dbReference type="InterPro" id="IPR035994">
    <property type="entry name" value="Nucleoside_phosphorylase_sf"/>
</dbReference>
<dbReference type="NCBIfam" id="TIGR00107">
    <property type="entry name" value="deoD"/>
    <property type="match status" value="1"/>
</dbReference>
<dbReference type="NCBIfam" id="NF004489">
    <property type="entry name" value="PRK05819.1"/>
    <property type="match status" value="1"/>
</dbReference>
<dbReference type="NCBIfam" id="NF009914">
    <property type="entry name" value="PRK13374.1"/>
    <property type="match status" value="1"/>
</dbReference>
<dbReference type="PANTHER" id="PTHR43691:SF2">
    <property type="entry name" value="PURINE NUCLEOSIDE PHOSPHORYLASE DEOD-TYPE"/>
    <property type="match status" value="1"/>
</dbReference>
<dbReference type="PANTHER" id="PTHR43691">
    <property type="entry name" value="URIDINE PHOSPHORYLASE"/>
    <property type="match status" value="1"/>
</dbReference>
<dbReference type="Pfam" id="PF01048">
    <property type="entry name" value="PNP_UDP_1"/>
    <property type="match status" value="1"/>
</dbReference>
<dbReference type="SUPFAM" id="SSF53167">
    <property type="entry name" value="Purine and uridine phosphorylases"/>
    <property type="match status" value="1"/>
</dbReference>
<dbReference type="PROSITE" id="PS01232">
    <property type="entry name" value="PNP_UDP_1"/>
    <property type="match status" value="1"/>
</dbReference>
<accession>B7LEN0</accession>
<sequence>MATPHINAEMGDFADVVLMPGDPLRAKYIAETFLEDAREVNNVRGMLGFTGTYKGRKISVMGHGMGIPSCSIYTKELITDFGVKKIIRVGSCGAVLPHVKLRDVVIGMGACTDSKVNRIRFKDHDFAAIADFDMVRNAVDAAKALGIDARVGNLFSADLFYSPDGEMFDVMEKYGILGVEMEAAGIYGVAAEFGAKALTICTVSDHIRTHEQTTAAERQTTFNDMIKIALESVLLGDKE</sequence>
<organism>
    <name type="scientific">Escherichia coli (strain 55989 / EAEC)</name>
    <dbReference type="NCBI Taxonomy" id="585055"/>
    <lineage>
        <taxon>Bacteria</taxon>
        <taxon>Pseudomonadati</taxon>
        <taxon>Pseudomonadota</taxon>
        <taxon>Gammaproteobacteria</taxon>
        <taxon>Enterobacterales</taxon>
        <taxon>Enterobacteriaceae</taxon>
        <taxon>Escherichia</taxon>
    </lineage>
</organism>
<evidence type="ECO:0000250" key="1">
    <source>
        <dbReference type="UniProtKB" id="P50389"/>
    </source>
</evidence>
<evidence type="ECO:0000255" key="2">
    <source>
        <dbReference type="HAMAP-Rule" id="MF_01627"/>
    </source>
</evidence>
<reference key="1">
    <citation type="journal article" date="2009" name="PLoS Genet.">
        <title>Organised genome dynamics in the Escherichia coli species results in highly diverse adaptive paths.</title>
        <authorList>
            <person name="Touchon M."/>
            <person name="Hoede C."/>
            <person name="Tenaillon O."/>
            <person name="Barbe V."/>
            <person name="Baeriswyl S."/>
            <person name="Bidet P."/>
            <person name="Bingen E."/>
            <person name="Bonacorsi S."/>
            <person name="Bouchier C."/>
            <person name="Bouvet O."/>
            <person name="Calteau A."/>
            <person name="Chiapello H."/>
            <person name="Clermont O."/>
            <person name="Cruveiller S."/>
            <person name="Danchin A."/>
            <person name="Diard M."/>
            <person name="Dossat C."/>
            <person name="Karoui M.E."/>
            <person name="Frapy E."/>
            <person name="Garry L."/>
            <person name="Ghigo J.M."/>
            <person name="Gilles A.M."/>
            <person name="Johnson J."/>
            <person name="Le Bouguenec C."/>
            <person name="Lescat M."/>
            <person name="Mangenot S."/>
            <person name="Martinez-Jehanne V."/>
            <person name="Matic I."/>
            <person name="Nassif X."/>
            <person name="Oztas S."/>
            <person name="Petit M.A."/>
            <person name="Pichon C."/>
            <person name="Rouy Z."/>
            <person name="Ruf C.S."/>
            <person name="Schneider D."/>
            <person name="Tourret J."/>
            <person name="Vacherie B."/>
            <person name="Vallenet D."/>
            <person name="Medigue C."/>
            <person name="Rocha E.P.C."/>
            <person name="Denamur E."/>
        </authorList>
    </citation>
    <scope>NUCLEOTIDE SEQUENCE [LARGE SCALE GENOMIC DNA]</scope>
    <source>
        <strain>55989 / EAEC</strain>
    </source>
</reference>
<protein>
    <recommendedName>
        <fullName evidence="2">Purine nucleoside phosphorylase DeoD-type</fullName>
        <shortName evidence="2">PNP</shortName>
        <ecNumber evidence="2">2.4.2.1</ecNumber>
    </recommendedName>
</protein>